<dbReference type="EC" id="6.3.4.2" evidence="1"/>
<dbReference type="EMBL" id="CP000468">
    <property type="protein sequence ID" value="ABJ02208.1"/>
    <property type="molecule type" value="Genomic_DNA"/>
</dbReference>
<dbReference type="RefSeq" id="WP_000210878.1">
    <property type="nucleotide sequence ID" value="NZ_CADILS010000024.1"/>
</dbReference>
<dbReference type="SMR" id="A1AEW8"/>
<dbReference type="MEROPS" id="C26.964"/>
<dbReference type="GeneID" id="93779218"/>
<dbReference type="KEGG" id="ecv:APECO1_3750"/>
<dbReference type="HOGENOM" id="CLU_011675_5_0_6"/>
<dbReference type="UniPathway" id="UPA00159">
    <property type="reaction ID" value="UER00277"/>
</dbReference>
<dbReference type="Proteomes" id="UP000008216">
    <property type="component" value="Chromosome"/>
</dbReference>
<dbReference type="GO" id="GO:0005829">
    <property type="term" value="C:cytosol"/>
    <property type="evidence" value="ECO:0007669"/>
    <property type="project" value="TreeGrafter"/>
</dbReference>
<dbReference type="GO" id="GO:0005524">
    <property type="term" value="F:ATP binding"/>
    <property type="evidence" value="ECO:0007669"/>
    <property type="project" value="UniProtKB-KW"/>
</dbReference>
<dbReference type="GO" id="GO:0003883">
    <property type="term" value="F:CTP synthase activity"/>
    <property type="evidence" value="ECO:0007669"/>
    <property type="project" value="UniProtKB-UniRule"/>
</dbReference>
<dbReference type="GO" id="GO:0004359">
    <property type="term" value="F:glutaminase activity"/>
    <property type="evidence" value="ECO:0007669"/>
    <property type="project" value="RHEA"/>
</dbReference>
<dbReference type="GO" id="GO:0042802">
    <property type="term" value="F:identical protein binding"/>
    <property type="evidence" value="ECO:0007669"/>
    <property type="project" value="TreeGrafter"/>
</dbReference>
<dbReference type="GO" id="GO:0046872">
    <property type="term" value="F:metal ion binding"/>
    <property type="evidence" value="ECO:0007669"/>
    <property type="project" value="UniProtKB-KW"/>
</dbReference>
<dbReference type="GO" id="GO:0044210">
    <property type="term" value="P:'de novo' CTP biosynthetic process"/>
    <property type="evidence" value="ECO:0007669"/>
    <property type="project" value="UniProtKB-UniRule"/>
</dbReference>
<dbReference type="GO" id="GO:0019856">
    <property type="term" value="P:pyrimidine nucleobase biosynthetic process"/>
    <property type="evidence" value="ECO:0007669"/>
    <property type="project" value="TreeGrafter"/>
</dbReference>
<dbReference type="CDD" id="cd03113">
    <property type="entry name" value="CTPS_N"/>
    <property type="match status" value="1"/>
</dbReference>
<dbReference type="CDD" id="cd01746">
    <property type="entry name" value="GATase1_CTP_Synthase"/>
    <property type="match status" value="1"/>
</dbReference>
<dbReference type="FunFam" id="3.40.50.300:FF:000009">
    <property type="entry name" value="CTP synthase"/>
    <property type="match status" value="1"/>
</dbReference>
<dbReference type="FunFam" id="3.40.50.880:FF:000002">
    <property type="entry name" value="CTP synthase"/>
    <property type="match status" value="1"/>
</dbReference>
<dbReference type="Gene3D" id="3.40.50.880">
    <property type="match status" value="1"/>
</dbReference>
<dbReference type="Gene3D" id="3.40.50.300">
    <property type="entry name" value="P-loop containing nucleotide triphosphate hydrolases"/>
    <property type="match status" value="1"/>
</dbReference>
<dbReference type="HAMAP" id="MF_01227">
    <property type="entry name" value="PyrG"/>
    <property type="match status" value="1"/>
</dbReference>
<dbReference type="InterPro" id="IPR029062">
    <property type="entry name" value="Class_I_gatase-like"/>
</dbReference>
<dbReference type="InterPro" id="IPR004468">
    <property type="entry name" value="CTP_synthase"/>
</dbReference>
<dbReference type="InterPro" id="IPR017456">
    <property type="entry name" value="CTP_synthase_N"/>
</dbReference>
<dbReference type="InterPro" id="IPR017926">
    <property type="entry name" value="GATASE"/>
</dbReference>
<dbReference type="InterPro" id="IPR033828">
    <property type="entry name" value="GATase1_CTP_Synthase"/>
</dbReference>
<dbReference type="InterPro" id="IPR027417">
    <property type="entry name" value="P-loop_NTPase"/>
</dbReference>
<dbReference type="NCBIfam" id="NF003792">
    <property type="entry name" value="PRK05380.1"/>
    <property type="match status" value="1"/>
</dbReference>
<dbReference type="NCBIfam" id="TIGR00337">
    <property type="entry name" value="PyrG"/>
    <property type="match status" value="1"/>
</dbReference>
<dbReference type="PANTHER" id="PTHR11550">
    <property type="entry name" value="CTP SYNTHASE"/>
    <property type="match status" value="1"/>
</dbReference>
<dbReference type="PANTHER" id="PTHR11550:SF0">
    <property type="entry name" value="CTP SYNTHASE-RELATED"/>
    <property type="match status" value="1"/>
</dbReference>
<dbReference type="Pfam" id="PF06418">
    <property type="entry name" value="CTP_synth_N"/>
    <property type="match status" value="1"/>
</dbReference>
<dbReference type="Pfam" id="PF00117">
    <property type="entry name" value="GATase"/>
    <property type="match status" value="1"/>
</dbReference>
<dbReference type="SUPFAM" id="SSF52317">
    <property type="entry name" value="Class I glutamine amidotransferase-like"/>
    <property type="match status" value="1"/>
</dbReference>
<dbReference type="SUPFAM" id="SSF52540">
    <property type="entry name" value="P-loop containing nucleoside triphosphate hydrolases"/>
    <property type="match status" value="1"/>
</dbReference>
<dbReference type="PROSITE" id="PS51273">
    <property type="entry name" value="GATASE_TYPE_1"/>
    <property type="match status" value="1"/>
</dbReference>
<sequence>MTTNYIFVTGGVVSSLGKGIAAASLAAILEARGLNVTIMKLDPYINVDPGTMSPIQHGEVFVTEDGAETDLDLGHYERFIRTKMSRRNNFTTGRIYSDVLRKERRGDYLGATVQVIPHITNAIKERVLEGGEGHDVVLVEIGGTVGDIESLPFLEAIRQMAVEIGREHTLFMHLTLVPYMAASGEVKTKPTQHSVKELLSIGIQPDILICRSDRAVPANERAKIALFCNVPEKAVISLKDVDSIYKIPGLLKSQGLDDYICKRFSLNCPEANLSEWEQVIFEEANPVSEVTIGMVGKYIELPDAYKSVIEALKHGGLKNRVSVNIKLIDSQDVETRGVEILKGLDAILVPGGFGYRGVEGMITTARFARENNIPYLGICLGMQVALIDYARHVANMENANSTEFVPDCKYPVVALITEWRDENGNVEVRSEKSDLGGTMRLGAQQCQLVDDSLVRQLYNAPTIVERHRHRYEVNNMLLKQIEDAGLRVAGRSGDDQLVEIIEVPNHPWFVACQFHPEFTSTPRDGHPLFAGFVKAASEFQKRQAK</sequence>
<protein>
    <recommendedName>
        <fullName evidence="1">CTP synthase</fullName>
        <ecNumber evidence="1">6.3.4.2</ecNumber>
    </recommendedName>
    <alternativeName>
        <fullName evidence="1">Cytidine 5'-triphosphate synthase</fullName>
    </alternativeName>
    <alternativeName>
        <fullName evidence="1">Cytidine triphosphate synthetase</fullName>
        <shortName evidence="1">CTP synthetase</shortName>
        <shortName evidence="1">CTPS</shortName>
    </alternativeName>
    <alternativeName>
        <fullName evidence="1">UTP--ammonia ligase</fullName>
    </alternativeName>
</protein>
<gene>
    <name evidence="1" type="primary">pyrG</name>
    <name type="ordered locus">Ecok1_27140</name>
    <name type="ORF">APECO1_3750</name>
</gene>
<proteinExistence type="inferred from homology"/>
<reference key="1">
    <citation type="journal article" date="2007" name="J. Bacteriol.">
        <title>The genome sequence of avian pathogenic Escherichia coli strain O1:K1:H7 shares strong similarities with human extraintestinal pathogenic E. coli genomes.</title>
        <authorList>
            <person name="Johnson T.J."/>
            <person name="Kariyawasam S."/>
            <person name="Wannemuehler Y."/>
            <person name="Mangiamele P."/>
            <person name="Johnson S.J."/>
            <person name="Doetkott C."/>
            <person name="Skyberg J.A."/>
            <person name="Lynne A.M."/>
            <person name="Johnson J.R."/>
            <person name="Nolan L.K."/>
        </authorList>
    </citation>
    <scope>NUCLEOTIDE SEQUENCE [LARGE SCALE GENOMIC DNA]</scope>
</reference>
<organism>
    <name type="scientific">Escherichia coli O1:K1 / APEC</name>
    <dbReference type="NCBI Taxonomy" id="405955"/>
    <lineage>
        <taxon>Bacteria</taxon>
        <taxon>Pseudomonadati</taxon>
        <taxon>Pseudomonadota</taxon>
        <taxon>Gammaproteobacteria</taxon>
        <taxon>Enterobacterales</taxon>
        <taxon>Enterobacteriaceae</taxon>
        <taxon>Escherichia</taxon>
    </lineage>
</organism>
<comment type="function">
    <text evidence="1">Catalyzes the ATP-dependent amination of UTP to CTP with either L-glutamine or ammonia as the source of nitrogen. Regulates intracellular CTP levels through interactions with the four ribonucleotide triphosphates.</text>
</comment>
<comment type="catalytic activity">
    <reaction evidence="1">
        <text>UTP + L-glutamine + ATP + H2O = CTP + L-glutamate + ADP + phosphate + 2 H(+)</text>
        <dbReference type="Rhea" id="RHEA:26426"/>
        <dbReference type="ChEBI" id="CHEBI:15377"/>
        <dbReference type="ChEBI" id="CHEBI:15378"/>
        <dbReference type="ChEBI" id="CHEBI:29985"/>
        <dbReference type="ChEBI" id="CHEBI:30616"/>
        <dbReference type="ChEBI" id="CHEBI:37563"/>
        <dbReference type="ChEBI" id="CHEBI:43474"/>
        <dbReference type="ChEBI" id="CHEBI:46398"/>
        <dbReference type="ChEBI" id="CHEBI:58359"/>
        <dbReference type="ChEBI" id="CHEBI:456216"/>
        <dbReference type="EC" id="6.3.4.2"/>
    </reaction>
</comment>
<comment type="catalytic activity">
    <reaction evidence="1">
        <text>L-glutamine + H2O = L-glutamate + NH4(+)</text>
        <dbReference type="Rhea" id="RHEA:15889"/>
        <dbReference type="ChEBI" id="CHEBI:15377"/>
        <dbReference type="ChEBI" id="CHEBI:28938"/>
        <dbReference type="ChEBI" id="CHEBI:29985"/>
        <dbReference type="ChEBI" id="CHEBI:58359"/>
    </reaction>
</comment>
<comment type="catalytic activity">
    <reaction evidence="1">
        <text>UTP + NH4(+) + ATP = CTP + ADP + phosphate + 2 H(+)</text>
        <dbReference type="Rhea" id="RHEA:16597"/>
        <dbReference type="ChEBI" id="CHEBI:15378"/>
        <dbReference type="ChEBI" id="CHEBI:28938"/>
        <dbReference type="ChEBI" id="CHEBI:30616"/>
        <dbReference type="ChEBI" id="CHEBI:37563"/>
        <dbReference type="ChEBI" id="CHEBI:43474"/>
        <dbReference type="ChEBI" id="CHEBI:46398"/>
        <dbReference type="ChEBI" id="CHEBI:456216"/>
    </reaction>
</comment>
<comment type="activity regulation">
    <text evidence="1">Allosterically activated by GTP, when glutamine is the substrate; GTP has no effect on the reaction when ammonia is the substrate. The allosteric effector GTP functions by stabilizing the protein conformation that binds the tetrahedral intermediate(s) formed during glutamine hydrolysis. Inhibited by the product CTP, via allosteric rather than competitive inhibition.</text>
</comment>
<comment type="pathway">
    <text evidence="1">Pyrimidine metabolism; CTP biosynthesis via de novo pathway; CTP from UDP: step 2/2.</text>
</comment>
<comment type="subunit">
    <text evidence="1">Homotetramer.</text>
</comment>
<comment type="miscellaneous">
    <text evidence="1">CTPSs have evolved a hybrid strategy for distinguishing between UTP and CTP. The overlapping regions of the product feedback inhibitory and substrate sites recognize a common feature in both compounds, the triphosphate moiety. To differentiate isosteric substrate and product pyrimidine rings, an additional pocket far from the expected kinase/ligase catalytic site, specifically recognizes the cytosine and ribose portions of the product inhibitor.</text>
</comment>
<comment type="similarity">
    <text evidence="1">Belongs to the CTP synthase family.</text>
</comment>
<name>PYRG_ECOK1</name>
<feature type="chain" id="PRO_1000139446" description="CTP synthase">
    <location>
        <begin position="1"/>
        <end position="545"/>
    </location>
</feature>
<feature type="domain" description="Glutamine amidotransferase type-1" evidence="1">
    <location>
        <begin position="291"/>
        <end position="542"/>
    </location>
</feature>
<feature type="region of interest" description="Amidoligase domain" evidence="1">
    <location>
        <begin position="1"/>
        <end position="266"/>
    </location>
</feature>
<feature type="active site" description="Nucleophile; for glutamine hydrolysis" evidence="1">
    <location>
        <position position="379"/>
    </location>
</feature>
<feature type="active site" evidence="1">
    <location>
        <position position="515"/>
    </location>
</feature>
<feature type="active site" evidence="1">
    <location>
        <position position="517"/>
    </location>
</feature>
<feature type="binding site" evidence="1">
    <location>
        <position position="14"/>
    </location>
    <ligand>
        <name>CTP</name>
        <dbReference type="ChEBI" id="CHEBI:37563"/>
        <note>allosteric inhibitor</note>
    </ligand>
</feature>
<feature type="binding site" evidence="1">
    <location>
        <position position="14"/>
    </location>
    <ligand>
        <name>UTP</name>
        <dbReference type="ChEBI" id="CHEBI:46398"/>
    </ligand>
</feature>
<feature type="binding site" evidence="1">
    <location>
        <begin position="15"/>
        <end position="20"/>
    </location>
    <ligand>
        <name>ATP</name>
        <dbReference type="ChEBI" id="CHEBI:30616"/>
    </ligand>
</feature>
<feature type="binding site" evidence="1">
    <location>
        <position position="72"/>
    </location>
    <ligand>
        <name>ATP</name>
        <dbReference type="ChEBI" id="CHEBI:30616"/>
    </ligand>
</feature>
<feature type="binding site" evidence="1">
    <location>
        <position position="72"/>
    </location>
    <ligand>
        <name>Mg(2+)</name>
        <dbReference type="ChEBI" id="CHEBI:18420"/>
    </ligand>
</feature>
<feature type="binding site" evidence="1">
    <location>
        <position position="140"/>
    </location>
    <ligand>
        <name>Mg(2+)</name>
        <dbReference type="ChEBI" id="CHEBI:18420"/>
    </ligand>
</feature>
<feature type="binding site" evidence="1">
    <location>
        <begin position="147"/>
        <end position="149"/>
    </location>
    <ligand>
        <name>CTP</name>
        <dbReference type="ChEBI" id="CHEBI:37563"/>
        <note>allosteric inhibitor</note>
    </ligand>
</feature>
<feature type="binding site" evidence="1">
    <location>
        <begin position="187"/>
        <end position="192"/>
    </location>
    <ligand>
        <name>CTP</name>
        <dbReference type="ChEBI" id="CHEBI:37563"/>
        <note>allosteric inhibitor</note>
    </ligand>
</feature>
<feature type="binding site" evidence="1">
    <location>
        <begin position="187"/>
        <end position="192"/>
    </location>
    <ligand>
        <name>UTP</name>
        <dbReference type="ChEBI" id="CHEBI:46398"/>
    </ligand>
</feature>
<feature type="binding site" evidence="1">
    <location>
        <position position="223"/>
    </location>
    <ligand>
        <name>CTP</name>
        <dbReference type="ChEBI" id="CHEBI:37563"/>
        <note>allosteric inhibitor</note>
    </ligand>
</feature>
<feature type="binding site" evidence="1">
    <location>
        <position position="223"/>
    </location>
    <ligand>
        <name>UTP</name>
        <dbReference type="ChEBI" id="CHEBI:46398"/>
    </ligand>
</feature>
<feature type="binding site" evidence="1">
    <location>
        <begin position="239"/>
        <end position="241"/>
    </location>
    <ligand>
        <name>ATP</name>
        <dbReference type="ChEBI" id="CHEBI:30616"/>
    </ligand>
</feature>
<feature type="binding site" evidence="1">
    <location>
        <position position="352"/>
    </location>
    <ligand>
        <name>L-glutamine</name>
        <dbReference type="ChEBI" id="CHEBI:58359"/>
    </ligand>
</feature>
<feature type="binding site" evidence="1">
    <location>
        <begin position="380"/>
        <end position="383"/>
    </location>
    <ligand>
        <name>L-glutamine</name>
        <dbReference type="ChEBI" id="CHEBI:58359"/>
    </ligand>
</feature>
<feature type="binding site" evidence="1">
    <location>
        <position position="403"/>
    </location>
    <ligand>
        <name>L-glutamine</name>
        <dbReference type="ChEBI" id="CHEBI:58359"/>
    </ligand>
</feature>
<feature type="binding site" evidence="1">
    <location>
        <position position="470"/>
    </location>
    <ligand>
        <name>L-glutamine</name>
        <dbReference type="ChEBI" id="CHEBI:58359"/>
    </ligand>
</feature>
<accession>A1AEW8</accession>
<keyword id="KW-0067">ATP-binding</keyword>
<keyword id="KW-0315">Glutamine amidotransferase</keyword>
<keyword id="KW-0436">Ligase</keyword>
<keyword id="KW-0460">Magnesium</keyword>
<keyword id="KW-0479">Metal-binding</keyword>
<keyword id="KW-0547">Nucleotide-binding</keyword>
<keyword id="KW-0665">Pyrimidine biosynthesis</keyword>
<keyword id="KW-1185">Reference proteome</keyword>
<evidence type="ECO:0000255" key="1">
    <source>
        <dbReference type="HAMAP-Rule" id="MF_01227"/>
    </source>
</evidence>